<reference key="1">
    <citation type="journal article" date="2007" name="PLoS ONE">
        <title>Molecular correlates of host specialization in Staphylococcus aureus.</title>
        <authorList>
            <person name="Herron-Olson L."/>
            <person name="Fitzgerald J.R."/>
            <person name="Musser J.M."/>
            <person name="Kapur V."/>
        </authorList>
    </citation>
    <scope>NUCLEOTIDE SEQUENCE [LARGE SCALE GENOMIC DNA]</scope>
    <source>
        <strain>bovine RF122 / ET3-1</strain>
    </source>
</reference>
<protein>
    <recommendedName>
        <fullName evidence="1">Heme A synthase</fullName>
        <shortName evidence="1">HAS</shortName>
        <ecNumber evidence="1">1.17.99.9</ecNumber>
    </recommendedName>
    <alternativeName>
        <fullName evidence="1">Cytochrome aa3-controlling protein</fullName>
    </alternativeName>
</protein>
<sequence>MFGKKNLKWLGVVATLMMTFVQLGGALVTKTGSADGCGSSWPLCHGALIPEFFPIDTIIELSHRAVSALSLLMVLWLVITAWKHIGYIKEIKPLSIISVGFLLLQALIGAAAVIWQQNDYVLALHFGISLISFSSVFLITLIIFSIDQKYEAAELYIKKPLRRLTWLMAIIIYCGVYTGALVRHADASLAYGGWPLPFHDLVPHSEQDWVQLTHRIMAFIVFTIIMITYIHAVKNYPNNRTVHYGYTAAFILVILQVITGALSIMTNVNLIIALFHALFITYLFGMTTYFIMLMLRSVRSDKQ</sequence>
<keyword id="KW-1003">Cell membrane</keyword>
<keyword id="KW-1015">Disulfide bond</keyword>
<keyword id="KW-0350">Heme biosynthesis</keyword>
<keyword id="KW-0408">Iron</keyword>
<keyword id="KW-0472">Membrane</keyword>
<keyword id="KW-0479">Metal-binding</keyword>
<keyword id="KW-0560">Oxidoreductase</keyword>
<keyword id="KW-0812">Transmembrane</keyword>
<keyword id="KW-1133">Transmembrane helix</keyword>
<dbReference type="EC" id="1.17.99.9" evidence="1"/>
<dbReference type="EMBL" id="AJ938182">
    <property type="protein sequence ID" value="CAI80668.1"/>
    <property type="status" value="ALT_INIT"/>
    <property type="molecule type" value="Genomic_DNA"/>
</dbReference>
<dbReference type="RefSeq" id="WP_000467118.1">
    <property type="nucleotide sequence ID" value="NC_007622.1"/>
</dbReference>
<dbReference type="SMR" id="Q2YX60"/>
<dbReference type="KEGG" id="sab:SAB0980c"/>
<dbReference type="HOGENOM" id="CLU_041525_3_1_9"/>
<dbReference type="UniPathway" id="UPA00269">
    <property type="reaction ID" value="UER00713"/>
</dbReference>
<dbReference type="GO" id="GO:0005886">
    <property type="term" value="C:plasma membrane"/>
    <property type="evidence" value="ECO:0007669"/>
    <property type="project" value="UniProtKB-SubCell"/>
</dbReference>
<dbReference type="GO" id="GO:0046872">
    <property type="term" value="F:metal ion binding"/>
    <property type="evidence" value="ECO:0007669"/>
    <property type="project" value="UniProtKB-KW"/>
</dbReference>
<dbReference type="GO" id="GO:0016653">
    <property type="term" value="F:oxidoreductase activity, acting on NAD(P)H, heme protein as acceptor"/>
    <property type="evidence" value="ECO:0007669"/>
    <property type="project" value="InterPro"/>
</dbReference>
<dbReference type="GO" id="GO:0006784">
    <property type="term" value="P:heme A biosynthetic process"/>
    <property type="evidence" value="ECO:0007669"/>
    <property type="project" value="UniProtKB-UniRule"/>
</dbReference>
<dbReference type="HAMAP" id="MF_01664">
    <property type="entry name" value="HemeA_synth_type1"/>
    <property type="match status" value="1"/>
</dbReference>
<dbReference type="InterPro" id="IPR003780">
    <property type="entry name" value="COX15/CtaA_fam"/>
</dbReference>
<dbReference type="InterPro" id="IPR050450">
    <property type="entry name" value="COX15/CtaA_HemeA_synthase"/>
</dbReference>
<dbReference type="InterPro" id="IPR023755">
    <property type="entry name" value="HemeA_Synthase_type1"/>
</dbReference>
<dbReference type="PANTHER" id="PTHR35457">
    <property type="entry name" value="HEME A SYNTHASE"/>
    <property type="match status" value="1"/>
</dbReference>
<dbReference type="PANTHER" id="PTHR35457:SF1">
    <property type="entry name" value="HEME A SYNTHASE"/>
    <property type="match status" value="1"/>
</dbReference>
<dbReference type="Pfam" id="PF02628">
    <property type="entry name" value="COX15-CtaA"/>
    <property type="match status" value="1"/>
</dbReference>
<evidence type="ECO:0000255" key="1">
    <source>
        <dbReference type="HAMAP-Rule" id="MF_01664"/>
    </source>
</evidence>
<evidence type="ECO:0000305" key="2"/>
<comment type="function">
    <text evidence="1">Catalyzes the conversion of heme O to heme A by two successive hydroxylations of the methyl group at C8. The first hydroxylation forms heme I, the second hydroxylation results in an unstable dihydroxymethyl group, which spontaneously dehydrates, resulting in the formyl group of heme A.</text>
</comment>
<comment type="catalytic activity">
    <reaction evidence="1">
        <text>Fe(II)-heme o + 2 A + H2O = Fe(II)-heme a + 2 AH2</text>
        <dbReference type="Rhea" id="RHEA:63388"/>
        <dbReference type="ChEBI" id="CHEBI:13193"/>
        <dbReference type="ChEBI" id="CHEBI:15377"/>
        <dbReference type="ChEBI" id="CHEBI:17499"/>
        <dbReference type="ChEBI" id="CHEBI:60530"/>
        <dbReference type="ChEBI" id="CHEBI:61715"/>
        <dbReference type="EC" id="1.17.99.9"/>
    </reaction>
    <physiologicalReaction direction="left-to-right" evidence="1">
        <dbReference type="Rhea" id="RHEA:63389"/>
    </physiologicalReaction>
</comment>
<comment type="cofactor">
    <cofactor evidence="1">
        <name>heme b</name>
        <dbReference type="ChEBI" id="CHEBI:60344"/>
    </cofactor>
</comment>
<comment type="pathway">
    <text evidence="1">Porphyrin-containing compound metabolism; heme A biosynthesis; heme A from heme O: step 1/1.</text>
</comment>
<comment type="subunit">
    <text evidence="1">Interacts with CtaB.</text>
</comment>
<comment type="subcellular location">
    <subcellularLocation>
        <location evidence="1">Cell membrane</location>
        <topology evidence="1">Multi-pass membrane protein</topology>
    </subcellularLocation>
</comment>
<comment type="domain">
    <text evidence="1">The N-half (TM1-TM4) and C-half (TM5-TM8) domains are connected by an intracellular loop. Each domain is formed from four-helix bundles and they align in a pseudo twofold symmetry manner. The N-half domain is the substrate-heme O binding domain and the C-half domain is the cofactor heme B binding domain.</text>
</comment>
<comment type="domain">
    <text evidence="1">The cysteines of disulfide bond Cys-37 and Cys-44 may be involved in transfer of reducing equivalents from quinol in the membrane to the active site of the enzyme.</text>
</comment>
<comment type="similarity">
    <text evidence="1">Belongs to the COX15/CtaA family. Type 1 subfamily.</text>
</comment>
<comment type="sequence caution" evidence="2">
    <conflict type="erroneous initiation">
        <sequence resource="EMBL-CDS" id="CAI80668"/>
    </conflict>
</comment>
<organism>
    <name type="scientific">Staphylococcus aureus (strain bovine RF122 / ET3-1)</name>
    <dbReference type="NCBI Taxonomy" id="273036"/>
    <lineage>
        <taxon>Bacteria</taxon>
        <taxon>Bacillati</taxon>
        <taxon>Bacillota</taxon>
        <taxon>Bacilli</taxon>
        <taxon>Bacillales</taxon>
        <taxon>Staphylococcaceae</taxon>
        <taxon>Staphylococcus</taxon>
    </lineage>
</organism>
<name>CTAA_STAAB</name>
<feature type="chain" id="PRO_0000348987" description="Heme A synthase">
    <location>
        <begin position="1"/>
        <end position="303"/>
    </location>
</feature>
<feature type="topological domain" description="Cytoplasmic" evidence="1">
    <location>
        <begin position="1"/>
        <end position="8"/>
    </location>
</feature>
<feature type="transmembrane region" description="Helical" evidence="1">
    <location>
        <begin position="9"/>
        <end position="29"/>
    </location>
</feature>
<feature type="topological domain" description="Extracellular" evidence="1">
    <location>
        <begin position="30"/>
        <end position="67"/>
    </location>
</feature>
<feature type="transmembrane region" description="Helical" evidence="1">
    <location>
        <begin position="68"/>
        <end position="88"/>
    </location>
</feature>
<feature type="topological domain" description="Cytoplasmic" evidence="1">
    <location>
        <begin position="89"/>
        <end position="93"/>
    </location>
</feature>
<feature type="transmembrane region" description="Helical" evidence="1">
    <location>
        <begin position="94"/>
        <end position="114"/>
    </location>
</feature>
<feature type="topological domain" description="Extracellular" evidence="1">
    <location>
        <begin position="115"/>
        <end position="125"/>
    </location>
</feature>
<feature type="transmembrane region" description="Helical" evidence="1">
    <location>
        <begin position="126"/>
        <end position="146"/>
    </location>
</feature>
<feature type="topological domain" description="Cytoplasmic" evidence="1">
    <location>
        <begin position="147"/>
        <end position="163"/>
    </location>
</feature>
<feature type="transmembrane region" description="Helical" evidence="1">
    <location>
        <begin position="164"/>
        <end position="184"/>
    </location>
</feature>
<feature type="topological domain" description="Extracellular" evidence="1">
    <location>
        <begin position="185"/>
        <end position="215"/>
    </location>
</feature>
<feature type="transmembrane region" description="Helical" evidence="1">
    <location>
        <begin position="216"/>
        <end position="236"/>
    </location>
</feature>
<feature type="topological domain" description="Cytoplasmic" evidence="1">
    <location>
        <begin position="237"/>
        <end position="244"/>
    </location>
</feature>
<feature type="transmembrane region" description="Helical" evidence="1">
    <location>
        <begin position="245"/>
        <end position="265"/>
    </location>
</feature>
<feature type="topological domain" description="Extracellular" evidence="1">
    <location>
        <begin position="266"/>
        <end position="270"/>
    </location>
</feature>
<feature type="transmembrane region" description="Helical" evidence="1">
    <location>
        <begin position="271"/>
        <end position="291"/>
    </location>
</feature>
<feature type="topological domain" description="Cytoplasmic" evidence="1">
    <location>
        <begin position="292"/>
        <end position="303"/>
    </location>
</feature>
<feature type="active site" evidence="1">
    <location>
        <position position="60"/>
    </location>
</feature>
<feature type="binding site" description="axial binding residue" evidence="1">
    <location>
        <position position="63"/>
    </location>
    <ligand>
        <name>heme o</name>
        <dbReference type="ChEBI" id="CHEBI:24480"/>
    </ligand>
    <ligandPart>
        <name>Fe</name>
        <dbReference type="ChEBI" id="CHEBI:18248"/>
    </ligandPart>
</feature>
<feature type="binding site" description="axial binding residue" evidence="1">
    <location>
        <position position="125"/>
    </location>
    <ligand>
        <name>heme o</name>
        <dbReference type="ChEBI" id="CHEBI:24480"/>
    </ligand>
    <ligandPart>
        <name>Fe</name>
        <dbReference type="ChEBI" id="CHEBI:18248"/>
    </ligandPart>
</feature>
<feature type="binding site" description="axial binding residue" evidence="1">
    <location>
        <position position="214"/>
    </location>
    <ligand>
        <name>heme b</name>
        <dbReference type="ChEBI" id="CHEBI:60344"/>
    </ligand>
    <ligandPart>
        <name>Fe</name>
        <dbReference type="ChEBI" id="CHEBI:18248"/>
    </ligandPart>
</feature>
<feature type="binding site" description="axial binding residue" evidence="1">
    <location>
        <position position="276"/>
    </location>
    <ligand>
        <name>heme b</name>
        <dbReference type="ChEBI" id="CHEBI:60344"/>
    </ligand>
    <ligandPart>
        <name>Fe</name>
        <dbReference type="ChEBI" id="CHEBI:18248"/>
    </ligandPart>
</feature>
<feature type="disulfide bond" description="Essential for catalytic activity" evidence="1">
    <location>
        <begin position="37"/>
        <end position="44"/>
    </location>
</feature>
<gene>
    <name evidence="1" type="primary">ctaA</name>
    <name type="ordered locus">SAB0980c</name>
</gene>
<proteinExistence type="inferred from homology"/>
<accession>Q2YX60</accession>